<reference key="1">
    <citation type="journal article" date="2007" name="Genome Res.">
        <title>Lateral gene transfer between obligate intracellular bacteria: evidence from the Rickettsia massiliae genome.</title>
        <authorList>
            <person name="Blanc G."/>
            <person name="Ogata H."/>
            <person name="Robert C."/>
            <person name="Audic S."/>
            <person name="Claverie J.-M."/>
            <person name="Raoult D."/>
        </authorList>
    </citation>
    <scope>NUCLEOTIDE SEQUENCE [LARGE SCALE GENOMIC DNA]</scope>
    <source>
        <strain>Mtu5</strain>
    </source>
</reference>
<accession>A8F1N1</accession>
<dbReference type="EC" id="1.5.1.5" evidence="1"/>
<dbReference type="EC" id="3.5.4.9" evidence="1"/>
<dbReference type="EMBL" id="CP000683">
    <property type="protein sequence ID" value="ABV84817.1"/>
    <property type="status" value="ALT_INIT"/>
    <property type="molecule type" value="Genomic_DNA"/>
</dbReference>
<dbReference type="RefSeq" id="WP_041404678.1">
    <property type="nucleotide sequence ID" value="NC_009900.1"/>
</dbReference>
<dbReference type="SMR" id="A8F1N1"/>
<dbReference type="KEGG" id="rms:RMA_0646"/>
<dbReference type="HOGENOM" id="CLU_034045_2_1_5"/>
<dbReference type="UniPathway" id="UPA00193"/>
<dbReference type="Proteomes" id="UP000001311">
    <property type="component" value="Chromosome"/>
</dbReference>
<dbReference type="GO" id="GO:0005829">
    <property type="term" value="C:cytosol"/>
    <property type="evidence" value="ECO:0007669"/>
    <property type="project" value="TreeGrafter"/>
</dbReference>
<dbReference type="GO" id="GO:0004477">
    <property type="term" value="F:methenyltetrahydrofolate cyclohydrolase activity"/>
    <property type="evidence" value="ECO:0007669"/>
    <property type="project" value="UniProtKB-UniRule"/>
</dbReference>
<dbReference type="GO" id="GO:0004488">
    <property type="term" value="F:methylenetetrahydrofolate dehydrogenase (NADP+) activity"/>
    <property type="evidence" value="ECO:0007669"/>
    <property type="project" value="UniProtKB-UniRule"/>
</dbReference>
<dbReference type="GO" id="GO:0000105">
    <property type="term" value="P:L-histidine biosynthetic process"/>
    <property type="evidence" value="ECO:0007669"/>
    <property type="project" value="UniProtKB-KW"/>
</dbReference>
<dbReference type="GO" id="GO:0009086">
    <property type="term" value="P:methionine biosynthetic process"/>
    <property type="evidence" value="ECO:0007669"/>
    <property type="project" value="UniProtKB-KW"/>
</dbReference>
<dbReference type="GO" id="GO:0006164">
    <property type="term" value="P:purine nucleotide biosynthetic process"/>
    <property type="evidence" value="ECO:0007669"/>
    <property type="project" value="UniProtKB-KW"/>
</dbReference>
<dbReference type="GO" id="GO:0035999">
    <property type="term" value="P:tetrahydrofolate interconversion"/>
    <property type="evidence" value="ECO:0007669"/>
    <property type="project" value="UniProtKB-UniRule"/>
</dbReference>
<dbReference type="CDD" id="cd01080">
    <property type="entry name" value="NAD_bind_m-THF_DH_Cyclohyd"/>
    <property type="match status" value="1"/>
</dbReference>
<dbReference type="FunFam" id="3.40.50.720:FF:000094">
    <property type="entry name" value="Bifunctional protein FolD"/>
    <property type="match status" value="1"/>
</dbReference>
<dbReference type="FunFam" id="3.40.50.10860:FF:000005">
    <property type="entry name" value="C-1-tetrahydrofolate synthase, cytoplasmic, putative"/>
    <property type="match status" value="1"/>
</dbReference>
<dbReference type="Gene3D" id="3.40.50.10860">
    <property type="entry name" value="Leucine Dehydrogenase, chain A, domain 1"/>
    <property type="match status" value="1"/>
</dbReference>
<dbReference type="Gene3D" id="3.40.50.720">
    <property type="entry name" value="NAD(P)-binding Rossmann-like Domain"/>
    <property type="match status" value="1"/>
</dbReference>
<dbReference type="HAMAP" id="MF_01576">
    <property type="entry name" value="THF_DHG_CYH"/>
    <property type="match status" value="1"/>
</dbReference>
<dbReference type="InterPro" id="IPR046346">
    <property type="entry name" value="Aminoacid_DH-like_N_sf"/>
</dbReference>
<dbReference type="InterPro" id="IPR036291">
    <property type="entry name" value="NAD(P)-bd_dom_sf"/>
</dbReference>
<dbReference type="InterPro" id="IPR000672">
    <property type="entry name" value="THF_DH/CycHdrlase"/>
</dbReference>
<dbReference type="InterPro" id="IPR020630">
    <property type="entry name" value="THF_DH/CycHdrlase_cat_dom"/>
</dbReference>
<dbReference type="InterPro" id="IPR020867">
    <property type="entry name" value="THF_DH/CycHdrlase_CS"/>
</dbReference>
<dbReference type="InterPro" id="IPR020631">
    <property type="entry name" value="THF_DH/CycHdrlase_NAD-bd_dom"/>
</dbReference>
<dbReference type="NCBIfam" id="NF010768">
    <property type="entry name" value="PRK14171.1"/>
    <property type="match status" value="1"/>
</dbReference>
<dbReference type="PANTHER" id="PTHR48099:SF5">
    <property type="entry name" value="C-1-TETRAHYDROFOLATE SYNTHASE, CYTOPLASMIC"/>
    <property type="match status" value="1"/>
</dbReference>
<dbReference type="PANTHER" id="PTHR48099">
    <property type="entry name" value="C-1-TETRAHYDROFOLATE SYNTHASE, CYTOPLASMIC-RELATED"/>
    <property type="match status" value="1"/>
</dbReference>
<dbReference type="Pfam" id="PF00763">
    <property type="entry name" value="THF_DHG_CYH"/>
    <property type="match status" value="1"/>
</dbReference>
<dbReference type="Pfam" id="PF02882">
    <property type="entry name" value="THF_DHG_CYH_C"/>
    <property type="match status" value="1"/>
</dbReference>
<dbReference type="PRINTS" id="PR00085">
    <property type="entry name" value="THFDHDRGNASE"/>
</dbReference>
<dbReference type="SUPFAM" id="SSF53223">
    <property type="entry name" value="Aminoacid dehydrogenase-like, N-terminal domain"/>
    <property type="match status" value="1"/>
</dbReference>
<dbReference type="SUPFAM" id="SSF51735">
    <property type="entry name" value="NAD(P)-binding Rossmann-fold domains"/>
    <property type="match status" value="1"/>
</dbReference>
<dbReference type="PROSITE" id="PS00766">
    <property type="entry name" value="THF_DHG_CYH_1"/>
    <property type="match status" value="1"/>
</dbReference>
<dbReference type="PROSITE" id="PS00767">
    <property type="entry name" value="THF_DHG_CYH_2"/>
    <property type="match status" value="1"/>
</dbReference>
<protein>
    <recommendedName>
        <fullName evidence="1">Bifunctional protein FolD</fullName>
    </recommendedName>
    <domain>
        <recommendedName>
            <fullName evidence="1">Methylenetetrahydrofolate dehydrogenase</fullName>
            <ecNumber evidence="1">1.5.1.5</ecNumber>
        </recommendedName>
    </domain>
    <domain>
        <recommendedName>
            <fullName evidence="1">Methenyltetrahydrofolate cyclohydrolase</fullName>
            <ecNumber evidence="1">3.5.4.9</ecNumber>
        </recommendedName>
    </domain>
</protein>
<feature type="chain" id="PRO_0000318788" description="Bifunctional protein FolD">
    <location>
        <begin position="1"/>
        <end position="288"/>
    </location>
</feature>
<feature type="binding site" evidence="1">
    <location>
        <begin position="166"/>
        <end position="168"/>
    </location>
    <ligand>
        <name>NADP(+)</name>
        <dbReference type="ChEBI" id="CHEBI:58349"/>
    </ligand>
</feature>
<feature type="binding site" evidence="1">
    <location>
        <position position="191"/>
    </location>
    <ligand>
        <name>NADP(+)</name>
        <dbReference type="ChEBI" id="CHEBI:58349"/>
    </ligand>
</feature>
<feature type="binding site" evidence="1">
    <location>
        <position position="232"/>
    </location>
    <ligand>
        <name>NADP(+)</name>
        <dbReference type="ChEBI" id="CHEBI:58349"/>
    </ligand>
</feature>
<organism>
    <name type="scientific">Rickettsia massiliae (strain Mtu5)</name>
    <dbReference type="NCBI Taxonomy" id="416276"/>
    <lineage>
        <taxon>Bacteria</taxon>
        <taxon>Pseudomonadati</taxon>
        <taxon>Pseudomonadota</taxon>
        <taxon>Alphaproteobacteria</taxon>
        <taxon>Rickettsiales</taxon>
        <taxon>Rickettsiaceae</taxon>
        <taxon>Rickettsieae</taxon>
        <taxon>Rickettsia</taxon>
        <taxon>spotted fever group</taxon>
    </lineage>
</organism>
<keyword id="KW-0028">Amino-acid biosynthesis</keyword>
<keyword id="KW-0368">Histidine biosynthesis</keyword>
<keyword id="KW-0378">Hydrolase</keyword>
<keyword id="KW-0486">Methionine biosynthesis</keyword>
<keyword id="KW-0511">Multifunctional enzyme</keyword>
<keyword id="KW-0521">NADP</keyword>
<keyword id="KW-0554">One-carbon metabolism</keyword>
<keyword id="KW-0560">Oxidoreductase</keyword>
<keyword id="KW-0658">Purine biosynthesis</keyword>
<name>FOLD_RICM5</name>
<evidence type="ECO:0000255" key="1">
    <source>
        <dbReference type="HAMAP-Rule" id="MF_01576"/>
    </source>
</evidence>
<evidence type="ECO:0000305" key="2"/>
<comment type="function">
    <text evidence="1">Catalyzes the oxidation of 5,10-methylenetetrahydrofolate to 5,10-methenyltetrahydrofolate and then the hydrolysis of 5,10-methenyltetrahydrofolate to 10-formyltetrahydrofolate.</text>
</comment>
<comment type="catalytic activity">
    <reaction evidence="1">
        <text>(6R)-5,10-methylene-5,6,7,8-tetrahydrofolate + NADP(+) = (6R)-5,10-methenyltetrahydrofolate + NADPH</text>
        <dbReference type="Rhea" id="RHEA:22812"/>
        <dbReference type="ChEBI" id="CHEBI:15636"/>
        <dbReference type="ChEBI" id="CHEBI:57455"/>
        <dbReference type="ChEBI" id="CHEBI:57783"/>
        <dbReference type="ChEBI" id="CHEBI:58349"/>
        <dbReference type="EC" id="1.5.1.5"/>
    </reaction>
</comment>
<comment type="catalytic activity">
    <reaction evidence="1">
        <text>(6R)-5,10-methenyltetrahydrofolate + H2O = (6R)-10-formyltetrahydrofolate + H(+)</text>
        <dbReference type="Rhea" id="RHEA:23700"/>
        <dbReference type="ChEBI" id="CHEBI:15377"/>
        <dbReference type="ChEBI" id="CHEBI:15378"/>
        <dbReference type="ChEBI" id="CHEBI:57455"/>
        <dbReference type="ChEBI" id="CHEBI:195366"/>
        <dbReference type="EC" id="3.5.4.9"/>
    </reaction>
</comment>
<comment type="pathway">
    <text evidence="1">One-carbon metabolism; tetrahydrofolate interconversion.</text>
</comment>
<comment type="subunit">
    <text evidence="1">Homodimer.</text>
</comment>
<comment type="similarity">
    <text evidence="1">Belongs to the tetrahydrofolate dehydrogenase/cyclohydrolase family.</text>
</comment>
<comment type="sequence caution" evidence="2">
    <conflict type="erroneous initiation">
        <sequence resource="EMBL-CDS" id="ABV84817"/>
    </conflict>
</comment>
<proteinExistence type="inferred from homology"/>
<sequence length="288" mass="31043">MNNIIDGKALANEILADLKLEIQELISQTNASPKLAIVLVGDNPASIIYVRNKIKNAHKIGIYTLLVNLSTTIHTNDLISKINELNLDNKISGIIVQLPLPSSIDKNKILSAVSPSKDIDGFHPLNVGYLHSGISQNFIPCTALGCLAVIKKYEPNLTGKNVVIIGRSNIVGKPLSALLLKENCSVTICHSKTHNLSSITSKTDIVVAAIGSPLKLTAEYFNPESIVIDVGINRISGNKIIGDVDFENVQSKVKYITPVPGGIGPMTIAFLLKNTVKAFKDSLYTLDK</sequence>
<gene>
    <name evidence="1" type="primary">folD</name>
    <name type="ordered locus">RMA_0646</name>
</gene>